<gene>
    <name evidence="1" type="primary">rsmH</name>
    <name type="synonym">mraW</name>
    <name type="ordered locus">SG0441</name>
</gene>
<sequence length="315" mass="34845">MSENYLHTTVLLDEAVKGLNLRPDSVYLDGTFGRGGHSRLILSKLGAQGRLFAIDRDPAAIEAARAIEDARFAIIHGPFSAMAEYMAQRDLLGKVDGILLDLGVSSPQLDDPERGFSFMRDGPLDMRMDTTRGQSAAQWLAQASAEDIAWVLKTFGEERFAKRIAQAIVAHNRQQPMTRTRELAALIADASPFRDKHKHPATRSFQAIRIYINSELEEIERALDGALTVLAPGGRLSVISFHSLEDRLVKQFIRQHSRGPQVPAGLPLTEAQIAAQYQDQRLLKAAGKMQPSAREISDNPRARSSVLRFAEKLAP</sequence>
<keyword id="KW-0963">Cytoplasm</keyword>
<keyword id="KW-0489">Methyltransferase</keyword>
<keyword id="KW-0698">rRNA processing</keyword>
<keyword id="KW-0949">S-adenosyl-L-methionine</keyword>
<keyword id="KW-0808">Transferase</keyword>
<organism>
    <name type="scientific">Sodalis glossinidius (strain morsitans)</name>
    <dbReference type="NCBI Taxonomy" id="343509"/>
    <lineage>
        <taxon>Bacteria</taxon>
        <taxon>Pseudomonadati</taxon>
        <taxon>Pseudomonadota</taxon>
        <taxon>Gammaproteobacteria</taxon>
        <taxon>Enterobacterales</taxon>
        <taxon>Bruguierivoracaceae</taxon>
        <taxon>Sodalis</taxon>
    </lineage>
</organism>
<evidence type="ECO:0000255" key="1">
    <source>
        <dbReference type="HAMAP-Rule" id="MF_01007"/>
    </source>
</evidence>
<proteinExistence type="inferred from homology"/>
<reference key="1">
    <citation type="journal article" date="2006" name="Genome Res.">
        <title>Massive genome erosion and functional adaptations provide insights into the symbiotic lifestyle of Sodalis glossinidius in the tsetse host.</title>
        <authorList>
            <person name="Toh H."/>
            <person name="Weiss B.L."/>
            <person name="Perkin S.A.H."/>
            <person name="Yamashita A."/>
            <person name="Oshima K."/>
            <person name="Hattori M."/>
            <person name="Aksoy S."/>
        </authorList>
    </citation>
    <scope>NUCLEOTIDE SEQUENCE [LARGE SCALE GENOMIC DNA]</scope>
    <source>
        <strain>morsitans</strain>
    </source>
</reference>
<feature type="chain" id="PRO_0000387130" description="Ribosomal RNA small subunit methyltransferase H">
    <location>
        <begin position="1"/>
        <end position="315"/>
    </location>
</feature>
<feature type="binding site" evidence="1">
    <location>
        <begin position="35"/>
        <end position="37"/>
    </location>
    <ligand>
        <name>S-adenosyl-L-methionine</name>
        <dbReference type="ChEBI" id="CHEBI:59789"/>
    </ligand>
</feature>
<feature type="binding site" evidence="1">
    <location>
        <position position="55"/>
    </location>
    <ligand>
        <name>S-adenosyl-L-methionine</name>
        <dbReference type="ChEBI" id="CHEBI:59789"/>
    </ligand>
</feature>
<feature type="binding site" evidence="1">
    <location>
        <position position="79"/>
    </location>
    <ligand>
        <name>S-adenosyl-L-methionine</name>
        <dbReference type="ChEBI" id="CHEBI:59789"/>
    </ligand>
</feature>
<feature type="binding site" evidence="1">
    <location>
        <position position="101"/>
    </location>
    <ligand>
        <name>S-adenosyl-L-methionine</name>
        <dbReference type="ChEBI" id="CHEBI:59789"/>
    </ligand>
</feature>
<feature type="binding site" evidence="1">
    <location>
        <position position="108"/>
    </location>
    <ligand>
        <name>S-adenosyl-L-methionine</name>
        <dbReference type="ChEBI" id="CHEBI:59789"/>
    </ligand>
</feature>
<dbReference type="EC" id="2.1.1.199" evidence="1"/>
<dbReference type="EMBL" id="AP008232">
    <property type="protein sequence ID" value="BAE73716.1"/>
    <property type="molecule type" value="Genomic_DNA"/>
</dbReference>
<dbReference type="RefSeq" id="WP_011410414.1">
    <property type="nucleotide sequence ID" value="NC_007712.1"/>
</dbReference>
<dbReference type="SMR" id="Q2NVV9"/>
<dbReference type="STRING" id="343509.SG0441"/>
<dbReference type="KEGG" id="sgl:SG0441"/>
<dbReference type="eggNOG" id="COG0275">
    <property type="taxonomic scope" value="Bacteria"/>
</dbReference>
<dbReference type="HOGENOM" id="CLU_038422_2_0_6"/>
<dbReference type="OrthoDB" id="9806637at2"/>
<dbReference type="BioCyc" id="SGLO343509:SGP1_RS03975-MONOMER"/>
<dbReference type="Proteomes" id="UP000001932">
    <property type="component" value="Chromosome"/>
</dbReference>
<dbReference type="GO" id="GO:0005737">
    <property type="term" value="C:cytoplasm"/>
    <property type="evidence" value="ECO:0007669"/>
    <property type="project" value="UniProtKB-SubCell"/>
</dbReference>
<dbReference type="GO" id="GO:0071424">
    <property type="term" value="F:rRNA (cytosine-N4-)-methyltransferase activity"/>
    <property type="evidence" value="ECO:0007669"/>
    <property type="project" value="UniProtKB-UniRule"/>
</dbReference>
<dbReference type="GO" id="GO:0070475">
    <property type="term" value="P:rRNA base methylation"/>
    <property type="evidence" value="ECO:0007669"/>
    <property type="project" value="UniProtKB-UniRule"/>
</dbReference>
<dbReference type="FunFam" id="1.10.150.170:FF:000001">
    <property type="entry name" value="Ribosomal RNA small subunit methyltransferase H"/>
    <property type="match status" value="1"/>
</dbReference>
<dbReference type="Gene3D" id="1.10.150.170">
    <property type="entry name" value="Putative methyltransferase TM0872, insert domain"/>
    <property type="match status" value="1"/>
</dbReference>
<dbReference type="Gene3D" id="3.40.50.150">
    <property type="entry name" value="Vaccinia Virus protein VP39"/>
    <property type="match status" value="1"/>
</dbReference>
<dbReference type="HAMAP" id="MF_01007">
    <property type="entry name" value="16SrRNA_methyltr_H"/>
    <property type="match status" value="1"/>
</dbReference>
<dbReference type="InterPro" id="IPR002903">
    <property type="entry name" value="RsmH"/>
</dbReference>
<dbReference type="InterPro" id="IPR023397">
    <property type="entry name" value="SAM-dep_MeTrfase_MraW_recog"/>
</dbReference>
<dbReference type="InterPro" id="IPR029063">
    <property type="entry name" value="SAM-dependent_MTases_sf"/>
</dbReference>
<dbReference type="NCBIfam" id="TIGR00006">
    <property type="entry name" value="16S rRNA (cytosine(1402)-N(4))-methyltransferase RsmH"/>
    <property type="match status" value="1"/>
</dbReference>
<dbReference type="PANTHER" id="PTHR11265:SF0">
    <property type="entry name" value="12S RRNA N4-METHYLCYTIDINE METHYLTRANSFERASE"/>
    <property type="match status" value="1"/>
</dbReference>
<dbReference type="PANTHER" id="PTHR11265">
    <property type="entry name" value="S-ADENOSYL-METHYLTRANSFERASE MRAW"/>
    <property type="match status" value="1"/>
</dbReference>
<dbReference type="Pfam" id="PF01795">
    <property type="entry name" value="Methyltransf_5"/>
    <property type="match status" value="1"/>
</dbReference>
<dbReference type="PIRSF" id="PIRSF004486">
    <property type="entry name" value="MraW"/>
    <property type="match status" value="1"/>
</dbReference>
<dbReference type="SUPFAM" id="SSF81799">
    <property type="entry name" value="Putative methyltransferase TM0872, insert domain"/>
    <property type="match status" value="1"/>
</dbReference>
<dbReference type="SUPFAM" id="SSF53335">
    <property type="entry name" value="S-adenosyl-L-methionine-dependent methyltransferases"/>
    <property type="match status" value="1"/>
</dbReference>
<name>RSMH_SODGM</name>
<protein>
    <recommendedName>
        <fullName evidence="1">Ribosomal RNA small subunit methyltransferase H</fullName>
        <ecNumber evidence="1">2.1.1.199</ecNumber>
    </recommendedName>
    <alternativeName>
        <fullName evidence="1">16S rRNA m(4)C1402 methyltransferase</fullName>
    </alternativeName>
    <alternativeName>
        <fullName evidence="1">rRNA (cytosine-N(4)-)-methyltransferase RsmH</fullName>
    </alternativeName>
</protein>
<comment type="function">
    <text evidence="1">Specifically methylates the N4 position of cytidine in position 1402 (C1402) of 16S rRNA.</text>
</comment>
<comment type="catalytic activity">
    <reaction evidence="1">
        <text>cytidine(1402) in 16S rRNA + S-adenosyl-L-methionine = N(4)-methylcytidine(1402) in 16S rRNA + S-adenosyl-L-homocysteine + H(+)</text>
        <dbReference type="Rhea" id="RHEA:42928"/>
        <dbReference type="Rhea" id="RHEA-COMP:10286"/>
        <dbReference type="Rhea" id="RHEA-COMP:10287"/>
        <dbReference type="ChEBI" id="CHEBI:15378"/>
        <dbReference type="ChEBI" id="CHEBI:57856"/>
        <dbReference type="ChEBI" id="CHEBI:59789"/>
        <dbReference type="ChEBI" id="CHEBI:74506"/>
        <dbReference type="ChEBI" id="CHEBI:82748"/>
        <dbReference type="EC" id="2.1.1.199"/>
    </reaction>
</comment>
<comment type="subcellular location">
    <subcellularLocation>
        <location evidence="1">Cytoplasm</location>
    </subcellularLocation>
</comment>
<comment type="similarity">
    <text evidence="1">Belongs to the methyltransferase superfamily. RsmH family.</text>
</comment>
<accession>Q2NVV9</accession>